<name>CCD81_MOUSE</name>
<feature type="chain" id="PRO_0000288878" description="Coiled-coil domain-containing protein 81">
    <location>
        <begin position="1"/>
        <end position="654"/>
    </location>
</feature>
<feature type="region of interest" description="Disordered" evidence="4">
    <location>
        <begin position="196"/>
        <end position="270"/>
    </location>
</feature>
<feature type="region of interest" description="Disordered" evidence="4">
    <location>
        <begin position="293"/>
        <end position="318"/>
    </location>
</feature>
<feature type="coiled-coil region" evidence="3">
    <location>
        <begin position="431"/>
        <end position="562"/>
    </location>
</feature>
<feature type="compositionally biased region" description="Basic and acidic residues" evidence="4">
    <location>
        <begin position="212"/>
        <end position="222"/>
    </location>
</feature>
<feature type="compositionally biased region" description="Basic and acidic residues" evidence="4">
    <location>
        <begin position="232"/>
        <end position="251"/>
    </location>
</feature>
<feature type="compositionally biased region" description="Polar residues" evidence="4">
    <location>
        <begin position="293"/>
        <end position="302"/>
    </location>
</feature>
<feature type="modified residue" description="Phosphoserine" evidence="1">
    <location>
        <position position="206"/>
    </location>
</feature>
<feature type="modified residue" description="Phosphoserine" evidence="1">
    <location>
        <position position="273"/>
    </location>
</feature>
<feature type="modified residue" description="Phosphoserine" evidence="1">
    <location>
        <position position="275"/>
    </location>
</feature>
<feature type="modified residue" description="Phosphoserine" evidence="1">
    <location>
        <position position="296"/>
    </location>
</feature>
<feature type="modified residue" description="Phosphoserine" evidence="1">
    <location>
        <position position="419"/>
    </location>
</feature>
<keyword id="KW-0175">Coiled coil</keyword>
<keyword id="KW-0963">Cytoplasm</keyword>
<keyword id="KW-0206">Cytoskeleton</keyword>
<keyword id="KW-0597">Phosphoprotein</keyword>
<keyword id="KW-1185">Reference proteome</keyword>
<protein>
    <recommendedName>
        <fullName>Coiled-coil domain-containing protein 81</fullName>
    </recommendedName>
</protein>
<evidence type="ECO:0000250" key="1">
    <source>
        <dbReference type="UniProtKB" id="Q5XIN9"/>
    </source>
</evidence>
<evidence type="ECO:0000250" key="2">
    <source>
        <dbReference type="UniProtKB" id="Q6ZN84"/>
    </source>
</evidence>
<evidence type="ECO:0000255" key="3"/>
<evidence type="ECO:0000256" key="4">
    <source>
        <dbReference type="SAM" id="MobiDB-lite"/>
    </source>
</evidence>
<sequence>MLDRVGPGFQDLCRQVLPTLPTLSQEEVSTIWANVSDFVERQLTMHKGVQISGLGTFTFSRQQLEVGNKKFVLVQRPVFIMAEKLVQTHGLKQNKVFSPGDIPVVPLNFVMISLEGPFNRDTIEGCVKETLLFLSRSISVKQKVEFTFKGIGVLSIRDSKVKMRFYKDFLCSMDGSGILTKALANRPGTMDSVLSSRESYRKRPNSAMAFPRIEHKETENKTPVEVVGEEGGENRPRKIKLKDQSDKEGGAREISSPKKHRERQSISPAKVTSVSLLDKFERSGNGGKITACENLSSPGCQRNDNERPRTSPAPACQDHNKAGQEMCYVCLQRAQRNFALHYGDERRRREIEDERLMQQYQILKDQEAFFKNQVKGMAAREQNQKNAAYNLGVAEAIRNHKNEKPEFYKSFLFDKRPLSPEINAFKQEEYSQSLLKQMESKREKEIKQRQNRELMDRLEQVQLTEELAAQRAQYLKEKMEETQHYKRALDAQVKNKPPQLPMFEPDSAEPIFGKNDGEREMEKRKREQSCMKHQMEAAASHKRNTILNQLVDQRRDLQMLQRTQREHMADRAAEMDRVNRLNQCLQEDWDRSLAMKKQRDVEEKAFERASDKLFLLDQCEKYRRCRQCQRRTCNTGESNLWPMNKFLQGSRLLV</sequence>
<dbReference type="EMBL" id="AK014876">
    <property type="protein sequence ID" value="BAB29597.1"/>
    <property type="molecule type" value="mRNA"/>
</dbReference>
<dbReference type="EMBL" id="BC127049">
    <property type="protein sequence ID" value="AAI27050.1"/>
    <property type="molecule type" value="mRNA"/>
</dbReference>
<dbReference type="CCDS" id="CCDS52306.1"/>
<dbReference type="RefSeq" id="NP_001156451.1">
    <property type="nucleotide sequence ID" value="NM_001162979.1"/>
</dbReference>
<dbReference type="SMR" id="Q9D5W4"/>
<dbReference type="BioGRID" id="214318">
    <property type="interactions" value="1"/>
</dbReference>
<dbReference type="FunCoup" id="Q9D5W4">
    <property type="interactions" value="104"/>
</dbReference>
<dbReference type="STRING" id="10090.ENSMUSP00000044087"/>
<dbReference type="GlyGen" id="Q9D5W4">
    <property type="glycosylation" value="1 site, 1 O-linked glycan (1 site)"/>
</dbReference>
<dbReference type="iPTMnet" id="Q9D5W4"/>
<dbReference type="PhosphoSitePlus" id="Q9D5W4"/>
<dbReference type="PaxDb" id="10090-ENSMUSP00000044087"/>
<dbReference type="ProteomicsDB" id="265599"/>
<dbReference type="Antibodypedia" id="50011">
    <property type="antibodies" value="100 antibodies from 18 providers"/>
</dbReference>
<dbReference type="Ensembl" id="ENSMUST00000041195.6">
    <property type="protein sequence ID" value="ENSMUSP00000044087.6"/>
    <property type="gene ID" value="ENSMUSG00000039391.12"/>
</dbReference>
<dbReference type="GeneID" id="70884"/>
<dbReference type="KEGG" id="mmu:70884"/>
<dbReference type="UCSC" id="uc009igf.2">
    <property type="organism name" value="mouse"/>
</dbReference>
<dbReference type="AGR" id="MGI:1918134"/>
<dbReference type="CTD" id="60494"/>
<dbReference type="MGI" id="MGI:1918134">
    <property type="gene designation" value="Ccdc81"/>
</dbReference>
<dbReference type="VEuPathDB" id="HostDB:ENSMUSG00000039391"/>
<dbReference type="eggNOG" id="ENOG502QT76">
    <property type="taxonomic scope" value="Eukaryota"/>
</dbReference>
<dbReference type="GeneTree" id="ENSGT00390000011985"/>
<dbReference type="HOGENOM" id="CLU_020603_0_0_1"/>
<dbReference type="InParanoid" id="Q9D5W4"/>
<dbReference type="OMA" id="QCEKYPR"/>
<dbReference type="OrthoDB" id="125906at2759"/>
<dbReference type="PhylomeDB" id="Q9D5W4"/>
<dbReference type="TreeFam" id="TF336185"/>
<dbReference type="BioGRID-ORCS" id="70884">
    <property type="hits" value="4 hits in 78 CRISPR screens"/>
</dbReference>
<dbReference type="PRO" id="PR:Q9D5W4"/>
<dbReference type="Proteomes" id="UP000000589">
    <property type="component" value="Chromosome 7"/>
</dbReference>
<dbReference type="RNAct" id="Q9D5W4">
    <property type="molecule type" value="protein"/>
</dbReference>
<dbReference type="Bgee" id="ENSMUSG00000039391">
    <property type="expression patterns" value="Expressed in spermatid and 45 other cell types or tissues"/>
</dbReference>
<dbReference type="ExpressionAtlas" id="Q9D5W4">
    <property type="expression patterns" value="baseline and differential"/>
</dbReference>
<dbReference type="GO" id="GO:0005813">
    <property type="term" value="C:centrosome"/>
    <property type="evidence" value="ECO:0000250"/>
    <property type="project" value="UniProtKB"/>
</dbReference>
<dbReference type="GO" id="GO:0036064">
    <property type="term" value="C:ciliary basal body"/>
    <property type="evidence" value="ECO:0007669"/>
    <property type="project" value="Ensembl"/>
</dbReference>
<dbReference type="GO" id="GO:0005737">
    <property type="term" value="C:cytoplasm"/>
    <property type="evidence" value="ECO:0007669"/>
    <property type="project" value="UniProtKB-KW"/>
</dbReference>
<dbReference type="GO" id="GO:0005886">
    <property type="term" value="C:plasma membrane"/>
    <property type="evidence" value="ECO:0007669"/>
    <property type="project" value="Ensembl"/>
</dbReference>
<dbReference type="InterPro" id="IPR040673">
    <property type="entry name" value="CCDC81_HU_dom_2"/>
</dbReference>
<dbReference type="InterPro" id="IPR026295">
    <property type="entry name" value="Coiled-coil_dom_cont_p_81"/>
</dbReference>
<dbReference type="InterPro" id="IPR028034">
    <property type="entry name" value="HU-CCDC81"/>
</dbReference>
<dbReference type="PANTHER" id="PTHR14362">
    <property type="entry name" value="COILED-COIL DOMAIN-CONTAINING PROTEIN 81"/>
    <property type="match status" value="1"/>
</dbReference>
<dbReference type="PANTHER" id="PTHR14362:SF2">
    <property type="entry name" value="COILED-COIL DOMAIN-CONTAINING PROTEIN 81"/>
    <property type="match status" value="1"/>
</dbReference>
<dbReference type="Pfam" id="PF14908">
    <property type="entry name" value="HU-CCDC81_euk_1"/>
    <property type="match status" value="1"/>
</dbReference>
<dbReference type="Pfam" id="PF18289">
    <property type="entry name" value="HU-CCDC81_euk_2"/>
    <property type="match status" value="1"/>
</dbReference>
<organism>
    <name type="scientific">Mus musculus</name>
    <name type="common">Mouse</name>
    <dbReference type="NCBI Taxonomy" id="10090"/>
    <lineage>
        <taxon>Eukaryota</taxon>
        <taxon>Metazoa</taxon>
        <taxon>Chordata</taxon>
        <taxon>Craniata</taxon>
        <taxon>Vertebrata</taxon>
        <taxon>Euteleostomi</taxon>
        <taxon>Mammalia</taxon>
        <taxon>Eutheria</taxon>
        <taxon>Euarchontoglires</taxon>
        <taxon>Glires</taxon>
        <taxon>Rodentia</taxon>
        <taxon>Myomorpha</taxon>
        <taxon>Muroidea</taxon>
        <taxon>Muridae</taxon>
        <taxon>Murinae</taxon>
        <taxon>Mus</taxon>
        <taxon>Mus</taxon>
    </lineage>
</organism>
<reference key="1">
    <citation type="journal article" date="2005" name="Science">
        <title>The transcriptional landscape of the mammalian genome.</title>
        <authorList>
            <person name="Carninci P."/>
            <person name="Kasukawa T."/>
            <person name="Katayama S."/>
            <person name="Gough J."/>
            <person name="Frith M.C."/>
            <person name="Maeda N."/>
            <person name="Oyama R."/>
            <person name="Ravasi T."/>
            <person name="Lenhard B."/>
            <person name="Wells C."/>
            <person name="Kodzius R."/>
            <person name="Shimokawa K."/>
            <person name="Bajic V.B."/>
            <person name="Brenner S.E."/>
            <person name="Batalov S."/>
            <person name="Forrest A.R."/>
            <person name="Zavolan M."/>
            <person name="Davis M.J."/>
            <person name="Wilming L.G."/>
            <person name="Aidinis V."/>
            <person name="Allen J.E."/>
            <person name="Ambesi-Impiombato A."/>
            <person name="Apweiler R."/>
            <person name="Aturaliya R.N."/>
            <person name="Bailey T.L."/>
            <person name="Bansal M."/>
            <person name="Baxter L."/>
            <person name="Beisel K.W."/>
            <person name="Bersano T."/>
            <person name="Bono H."/>
            <person name="Chalk A.M."/>
            <person name="Chiu K.P."/>
            <person name="Choudhary V."/>
            <person name="Christoffels A."/>
            <person name="Clutterbuck D.R."/>
            <person name="Crowe M.L."/>
            <person name="Dalla E."/>
            <person name="Dalrymple B.P."/>
            <person name="de Bono B."/>
            <person name="Della Gatta G."/>
            <person name="di Bernardo D."/>
            <person name="Down T."/>
            <person name="Engstrom P."/>
            <person name="Fagiolini M."/>
            <person name="Faulkner G."/>
            <person name="Fletcher C.F."/>
            <person name="Fukushima T."/>
            <person name="Furuno M."/>
            <person name="Futaki S."/>
            <person name="Gariboldi M."/>
            <person name="Georgii-Hemming P."/>
            <person name="Gingeras T.R."/>
            <person name="Gojobori T."/>
            <person name="Green R.E."/>
            <person name="Gustincich S."/>
            <person name="Harbers M."/>
            <person name="Hayashi Y."/>
            <person name="Hensch T.K."/>
            <person name="Hirokawa N."/>
            <person name="Hill D."/>
            <person name="Huminiecki L."/>
            <person name="Iacono M."/>
            <person name="Ikeo K."/>
            <person name="Iwama A."/>
            <person name="Ishikawa T."/>
            <person name="Jakt M."/>
            <person name="Kanapin A."/>
            <person name="Katoh M."/>
            <person name="Kawasawa Y."/>
            <person name="Kelso J."/>
            <person name="Kitamura H."/>
            <person name="Kitano H."/>
            <person name="Kollias G."/>
            <person name="Krishnan S.P."/>
            <person name="Kruger A."/>
            <person name="Kummerfeld S.K."/>
            <person name="Kurochkin I.V."/>
            <person name="Lareau L.F."/>
            <person name="Lazarevic D."/>
            <person name="Lipovich L."/>
            <person name="Liu J."/>
            <person name="Liuni S."/>
            <person name="McWilliam S."/>
            <person name="Madan Babu M."/>
            <person name="Madera M."/>
            <person name="Marchionni L."/>
            <person name="Matsuda H."/>
            <person name="Matsuzawa S."/>
            <person name="Miki H."/>
            <person name="Mignone F."/>
            <person name="Miyake S."/>
            <person name="Morris K."/>
            <person name="Mottagui-Tabar S."/>
            <person name="Mulder N."/>
            <person name="Nakano N."/>
            <person name="Nakauchi H."/>
            <person name="Ng P."/>
            <person name="Nilsson R."/>
            <person name="Nishiguchi S."/>
            <person name="Nishikawa S."/>
            <person name="Nori F."/>
            <person name="Ohara O."/>
            <person name="Okazaki Y."/>
            <person name="Orlando V."/>
            <person name="Pang K.C."/>
            <person name="Pavan W.J."/>
            <person name="Pavesi G."/>
            <person name="Pesole G."/>
            <person name="Petrovsky N."/>
            <person name="Piazza S."/>
            <person name="Reed J."/>
            <person name="Reid J.F."/>
            <person name="Ring B.Z."/>
            <person name="Ringwald M."/>
            <person name="Rost B."/>
            <person name="Ruan Y."/>
            <person name="Salzberg S.L."/>
            <person name="Sandelin A."/>
            <person name="Schneider C."/>
            <person name="Schoenbach C."/>
            <person name="Sekiguchi K."/>
            <person name="Semple C.A."/>
            <person name="Seno S."/>
            <person name="Sessa L."/>
            <person name="Sheng Y."/>
            <person name="Shibata Y."/>
            <person name="Shimada H."/>
            <person name="Shimada K."/>
            <person name="Silva D."/>
            <person name="Sinclair B."/>
            <person name="Sperling S."/>
            <person name="Stupka E."/>
            <person name="Sugiura K."/>
            <person name="Sultana R."/>
            <person name="Takenaka Y."/>
            <person name="Taki K."/>
            <person name="Tammoja K."/>
            <person name="Tan S.L."/>
            <person name="Tang S."/>
            <person name="Taylor M.S."/>
            <person name="Tegner J."/>
            <person name="Teichmann S.A."/>
            <person name="Ueda H.R."/>
            <person name="van Nimwegen E."/>
            <person name="Verardo R."/>
            <person name="Wei C.L."/>
            <person name="Yagi K."/>
            <person name="Yamanishi H."/>
            <person name="Zabarovsky E."/>
            <person name="Zhu S."/>
            <person name="Zimmer A."/>
            <person name="Hide W."/>
            <person name="Bult C."/>
            <person name="Grimmond S.M."/>
            <person name="Teasdale R.D."/>
            <person name="Liu E.T."/>
            <person name="Brusic V."/>
            <person name="Quackenbush J."/>
            <person name="Wahlestedt C."/>
            <person name="Mattick J.S."/>
            <person name="Hume D.A."/>
            <person name="Kai C."/>
            <person name="Sasaki D."/>
            <person name="Tomaru Y."/>
            <person name="Fukuda S."/>
            <person name="Kanamori-Katayama M."/>
            <person name="Suzuki M."/>
            <person name="Aoki J."/>
            <person name="Arakawa T."/>
            <person name="Iida J."/>
            <person name="Imamura K."/>
            <person name="Itoh M."/>
            <person name="Kato T."/>
            <person name="Kawaji H."/>
            <person name="Kawagashira N."/>
            <person name="Kawashima T."/>
            <person name="Kojima M."/>
            <person name="Kondo S."/>
            <person name="Konno H."/>
            <person name="Nakano K."/>
            <person name="Ninomiya N."/>
            <person name="Nishio T."/>
            <person name="Okada M."/>
            <person name="Plessy C."/>
            <person name="Shibata K."/>
            <person name="Shiraki T."/>
            <person name="Suzuki S."/>
            <person name="Tagami M."/>
            <person name="Waki K."/>
            <person name="Watahiki A."/>
            <person name="Okamura-Oho Y."/>
            <person name="Suzuki H."/>
            <person name="Kawai J."/>
            <person name="Hayashizaki Y."/>
        </authorList>
    </citation>
    <scope>NUCLEOTIDE SEQUENCE [LARGE SCALE MRNA]</scope>
    <source>
        <strain>C57BL/6J</strain>
        <tissue>Testis</tissue>
    </source>
</reference>
<reference key="2">
    <citation type="journal article" date="2004" name="Genome Res.">
        <title>The status, quality, and expansion of the NIH full-length cDNA project: the Mammalian Gene Collection (MGC).</title>
        <authorList>
            <consortium name="The MGC Project Team"/>
        </authorList>
    </citation>
    <scope>NUCLEOTIDE SEQUENCE [LARGE SCALE MRNA] OF 1-613</scope>
</reference>
<proteinExistence type="evidence at transcript level"/>
<gene>
    <name type="primary">Ccdc81</name>
</gene>
<accession>Q9D5W4</accession>
<accession>A1L0U4</accession>
<comment type="subcellular location">
    <subcellularLocation>
        <location evidence="2">Cytoplasm</location>
        <location evidence="2">Cytoskeleton</location>
        <location evidence="2">Microtubule organizing center</location>
        <location evidence="2">Centrosome</location>
    </subcellularLocation>
</comment>